<proteinExistence type="inferred from homology"/>
<dbReference type="EC" id="2.3.1.286" evidence="1 2"/>
<dbReference type="EMBL" id="AE009951">
    <property type="protein sequence ID" value="AAL95381.1"/>
    <property type="molecule type" value="Genomic_DNA"/>
</dbReference>
<dbReference type="RefSeq" id="NP_604082.1">
    <property type="nucleotide sequence ID" value="NC_003454.1"/>
</dbReference>
<dbReference type="RefSeq" id="WP_011016971.1">
    <property type="nucleotide sequence ID" value="NZ_CP028101.1"/>
</dbReference>
<dbReference type="SMR" id="Q8REC3"/>
<dbReference type="FunCoup" id="Q8REC3">
    <property type="interactions" value="274"/>
</dbReference>
<dbReference type="STRING" id="190304.FN1185"/>
<dbReference type="PaxDb" id="190304-FN1185"/>
<dbReference type="EnsemblBacteria" id="AAL95381">
    <property type="protein sequence ID" value="AAL95381"/>
    <property type="gene ID" value="FN1185"/>
</dbReference>
<dbReference type="GeneID" id="79784163"/>
<dbReference type="KEGG" id="fnu:FN1185"/>
<dbReference type="PATRIC" id="fig|190304.8.peg.1749"/>
<dbReference type="eggNOG" id="COG0846">
    <property type="taxonomic scope" value="Bacteria"/>
</dbReference>
<dbReference type="HOGENOM" id="CLU_023643_3_0_0"/>
<dbReference type="InParanoid" id="Q8REC3"/>
<dbReference type="BioCyc" id="FNUC190304:G1FZS-1763-MONOMER"/>
<dbReference type="Proteomes" id="UP000002521">
    <property type="component" value="Chromosome"/>
</dbReference>
<dbReference type="GO" id="GO:0005737">
    <property type="term" value="C:cytoplasm"/>
    <property type="evidence" value="ECO:0007669"/>
    <property type="project" value="UniProtKB-SubCell"/>
</dbReference>
<dbReference type="GO" id="GO:0017136">
    <property type="term" value="F:histone deacetylase activity, NAD-dependent"/>
    <property type="evidence" value="ECO:0000318"/>
    <property type="project" value="GO_Central"/>
</dbReference>
<dbReference type="GO" id="GO:0070403">
    <property type="term" value="F:NAD+ binding"/>
    <property type="evidence" value="ECO:0000318"/>
    <property type="project" value="GO_Central"/>
</dbReference>
<dbReference type="GO" id="GO:0008270">
    <property type="term" value="F:zinc ion binding"/>
    <property type="evidence" value="ECO:0007669"/>
    <property type="project" value="UniProtKB-UniRule"/>
</dbReference>
<dbReference type="Gene3D" id="3.30.1600.10">
    <property type="entry name" value="SIR2/SIRT2 'Small Domain"/>
    <property type="match status" value="1"/>
</dbReference>
<dbReference type="Gene3D" id="3.40.50.1220">
    <property type="entry name" value="TPP-binding domain"/>
    <property type="match status" value="1"/>
</dbReference>
<dbReference type="HAMAP" id="MF_01968">
    <property type="entry name" value="Sirtuin_ClassU"/>
    <property type="match status" value="1"/>
</dbReference>
<dbReference type="InterPro" id="IPR029035">
    <property type="entry name" value="DHS-like_NAD/FAD-binding_dom"/>
</dbReference>
<dbReference type="InterPro" id="IPR050134">
    <property type="entry name" value="NAD-dep_sirtuin_deacylases"/>
</dbReference>
<dbReference type="InterPro" id="IPR003000">
    <property type="entry name" value="Sirtuin"/>
</dbReference>
<dbReference type="InterPro" id="IPR026591">
    <property type="entry name" value="Sirtuin_cat_small_dom_sf"/>
</dbReference>
<dbReference type="InterPro" id="IPR028628">
    <property type="entry name" value="Sirtuin_class_U"/>
</dbReference>
<dbReference type="InterPro" id="IPR026590">
    <property type="entry name" value="Ssirtuin_cat_dom"/>
</dbReference>
<dbReference type="NCBIfam" id="NF001752">
    <property type="entry name" value="PRK00481.1-1"/>
    <property type="match status" value="1"/>
</dbReference>
<dbReference type="PANTHER" id="PTHR11085:SF4">
    <property type="entry name" value="NAD-DEPENDENT PROTEIN DEACYLASE"/>
    <property type="match status" value="1"/>
</dbReference>
<dbReference type="PANTHER" id="PTHR11085">
    <property type="entry name" value="NAD-DEPENDENT PROTEIN DEACYLASE SIRTUIN-5, MITOCHONDRIAL-RELATED"/>
    <property type="match status" value="1"/>
</dbReference>
<dbReference type="Pfam" id="PF02146">
    <property type="entry name" value="SIR2"/>
    <property type="match status" value="1"/>
</dbReference>
<dbReference type="SUPFAM" id="SSF52467">
    <property type="entry name" value="DHS-like NAD/FAD-binding domain"/>
    <property type="match status" value="1"/>
</dbReference>
<dbReference type="PROSITE" id="PS50305">
    <property type="entry name" value="SIRTUIN"/>
    <property type="match status" value="1"/>
</dbReference>
<evidence type="ECO:0000255" key="1">
    <source>
        <dbReference type="HAMAP-Rule" id="MF_01968"/>
    </source>
</evidence>
<evidence type="ECO:0000255" key="2">
    <source>
        <dbReference type="PROSITE-ProRule" id="PRU00236"/>
    </source>
</evidence>
<comment type="function">
    <text evidence="1">NAD-dependent protein deacetylase which modulates the activities of several enzymes which are inactive in their acetylated form.</text>
</comment>
<comment type="catalytic activity">
    <reaction evidence="1">
        <text>N(6)-acetyl-L-lysyl-[protein] + NAD(+) + H2O = 2''-O-acetyl-ADP-D-ribose + nicotinamide + L-lysyl-[protein]</text>
        <dbReference type="Rhea" id="RHEA:43636"/>
        <dbReference type="Rhea" id="RHEA-COMP:9752"/>
        <dbReference type="Rhea" id="RHEA-COMP:10731"/>
        <dbReference type="ChEBI" id="CHEBI:15377"/>
        <dbReference type="ChEBI" id="CHEBI:17154"/>
        <dbReference type="ChEBI" id="CHEBI:29969"/>
        <dbReference type="ChEBI" id="CHEBI:57540"/>
        <dbReference type="ChEBI" id="CHEBI:61930"/>
        <dbReference type="ChEBI" id="CHEBI:83767"/>
        <dbReference type="EC" id="2.3.1.286"/>
    </reaction>
</comment>
<comment type="cofactor">
    <cofactor evidence="1">
        <name>Zn(2+)</name>
        <dbReference type="ChEBI" id="CHEBI:29105"/>
    </cofactor>
    <text evidence="1">Binds 1 zinc ion per subunit.</text>
</comment>
<comment type="subcellular location">
    <subcellularLocation>
        <location evidence="1">Cytoplasm</location>
    </subcellularLocation>
</comment>
<comment type="similarity">
    <text evidence="1">Belongs to the sirtuin family. Class U subfamily.</text>
</comment>
<sequence length="252" mass="28730">MDSKRDEKILELVKILKNTKYLVFFGGAGTSTDSGVKDFRGKDGLYKTLYKDKYRPEEVLSSDFFYSHRDIFMKYVEKELNIKGLKPNKGHMALVELEKIGILKAVITQNIDDLHQVSGNKNVLELHGSLKRWYCLSCGKTADRNFSCECGGVVRPDVTLYGENLNQSVVNEAIYQLEQADTLIVAGTSLTVYPAAYYLRYFRGKNLIIINDMDTQYDGEASLVIKDNFSYVMDRVVKELKKIQFGKTLKNI</sequence>
<keyword id="KW-0963">Cytoplasm</keyword>
<keyword id="KW-0479">Metal-binding</keyword>
<keyword id="KW-0520">NAD</keyword>
<keyword id="KW-1185">Reference proteome</keyword>
<keyword id="KW-0808">Transferase</keyword>
<keyword id="KW-0862">Zinc</keyword>
<feature type="chain" id="PRO_0000110316" description="NAD-dependent protein deacetylase">
    <location>
        <begin position="1"/>
        <end position="252"/>
    </location>
</feature>
<feature type="domain" description="Deacetylase sirtuin-type" evidence="2">
    <location>
        <begin position="2"/>
        <end position="243"/>
    </location>
</feature>
<feature type="active site" description="Proton acceptor" evidence="2">
    <location>
        <position position="127"/>
    </location>
</feature>
<feature type="binding site" evidence="1">
    <location>
        <position position="28"/>
    </location>
    <ligand>
        <name>NAD(+)</name>
        <dbReference type="ChEBI" id="CHEBI:57540"/>
    </ligand>
</feature>
<feature type="binding site" evidence="1">
    <location>
        <position position="32"/>
    </location>
    <ligand>
        <name>NAD(+)</name>
        <dbReference type="ChEBI" id="CHEBI:57540"/>
    </ligand>
</feature>
<feature type="binding site" evidence="1">
    <location>
        <position position="39"/>
    </location>
    <ligand>
        <name>NAD(+)</name>
        <dbReference type="ChEBI" id="CHEBI:57540"/>
    </ligand>
</feature>
<feature type="binding site" evidence="1">
    <location>
        <position position="39"/>
    </location>
    <ligand>
        <name>nicotinamide</name>
        <dbReference type="ChEBI" id="CHEBI:17154"/>
    </ligand>
</feature>
<feature type="binding site" evidence="1">
    <location>
        <position position="40"/>
    </location>
    <ligand>
        <name>NAD(+)</name>
        <dbReference type="ChEBI" id="CHEBI:57540"/>
    </ligand>
</feature>
<feature type="binding site" evidence="1">
    <location>
        <position position="109"/>
    </location>
    <ligand>
        <name>NAD(+)</name>
        <dbReference type="ChEBI" id="CHEBI:57540"/>
    </ligand>
</feature>
<feature type="binding site" evidence="1">
    <location>
        <position position="111"/>
    </location>
    <ligand>
        <name>NAD(+)</name>
        <dbReference type="ChEBI" id="CHEBI:57540"/>
    </ligand>
</feature>
<feature type="binding site" evidence="1">
    <location>
        <position position="111"/>
    </location>
    <ligand>
        <name>nicotinamide</name>
        <dbReference type="ChEBI" id="CHEBI:17154"/>
    </ligand>
</feature>
<feature type="binding site" evidence="1">
    <location>
        <position position="112"/>
    </location>
    <ligand>
        <name>NAD(+)</name>
        <dbReference type="ChEBI" id="CHEBI:57540"/>
    </ligand>
</feature>
<feature type="binding site" evidence="1">
    <location>
        <position position="112"/>
    </location>
    <ligand>
        <name>nicotinamide</name>
        <dbReference type="ChEBI" id="CHEBI:17154"/>
    </ligand>
</feature>
<feature type="binding site" evidence="1">
    <location>
        <position position="127"/>
    </location>
    <ligand>
        <name>NAD(+)</name>
        <dbReference type="ChEBI" id="CHEBI:57540"/>
    </ligand>
</feature>
<feature type="binding site" evidence="1">
    <location>
        <position position="135"/>
    </location>
    <ligand>
        <name>Zn(2+)</name>
        <dbReference type="ChEBI" id="CHEBI:29105"/>
    </ligand>
</feature>
<feature type="binding site" evidence="1">
    <location>
        <position position="138"/>
    </location>
    <ligand>
        <name>Zn(2+)</name>
        <dbReference type="ChEBI" id="CHEBI:29105"/>
    </ligand>
</feature>
<feature type="binding site" evidence="1">
    <location>
        <position position="148"/>
    </location>
    <ligand>
        <name>Zn(2+)</name>
        <dbReference type="ChEBI" id="CHEBI:29105"/>
    </ligand>
</feature>
<feature type="binding site" evidence="1">
    <location>
        <position position="150"/>
    </location>
    <ligand>
        <name>Zn(2+)</name>
        <dbReference type="ChEBI" id="CHEBI:29105"/>
    </ligand>
</feature>
<feature type="binding site" evidence="1">
    <location>
        <position position="188"/>
    </location>
    <ligand>
        <name>NAD(+)</name>
        <dbReference type="ChEBI" id="CHEBI:57540"/>
    </ligand>
</feature>
<feature type="binding site" evidence="1">
    <location>
        <position position="189"/>
    </location>
    <ligand>
        <name>NAD(+)</name>
        <dbReference type="ChEBI" id="CHEBI:57540"/>
    </ligand>
</feature>
<feature type="binding site" evidence="1">
    <location>
        <position position="211"/>
    </location>
    <ligand>
        <name>NAD(+)</name>
        <dbReference type="ChEBI" id="CHEBI:57540"/>
    </ligand>
</feature>
<organism>
    <name type="scientific">Fusobacterium nucleatum subsp. nucleatum (strain ATCC 25586 / DSM 15643 / BCRC 10681 / CIP 101130 / JCM 8532 / KCTC 2640 / LMG 13131 / VPI 4355)</name>
    <dbReference type="NCBI Taxonomy" id="190304"/>
    <lineage>
        <taxon>Bacteria</taxon>
        <taxon>Fusobacteriati</taxon>
        <taxon>Fusobacteriota</taxon>
        <taxon>Fusobacteriia</taxon>
        <taxon>Fusobacteriales</taxon>
        <taxon>Fusobacteriaceae</taxon>
        <taxon>Fusobacterium</taxon>
    </lineage>
</organism>
<gene>
    <name evidence="1" type="primary">cobB</name>
    <name type="ordered locus">FN1185</name>
</gene>
<accession>Q8REC3</accession>
<protein>
    <recommendedName>
        <fullName evidence="1">NAD-dependent protein deacetylase</fullName>
        <ecNumber evidence="1 2">2.3.1.286</ecNumber>
    </recommendedName>
    <alternativeName>
        <fullName evidence="1">Regulatory protein SIR2 homolog</fullName>
    </alternativeName>
</protein>
<name>NPD_FUSNN</name>
<reference key="1">
    <citation type="journal article" date="2002" name="J. Bacteriol.">
        <title>Genome sequence and analysis of the oral bacterium Fusobacterium nucleatum strain ATCC 25586.</title>
        <authorList>
            <person name="Kapatral V."/>
            <person name="Anderson I."/>
            <person name="Ivanova N."/>
            <person name="Reznik G."/>
            <person name="Los T."/>
            <person name="Lykidis A."/>
            <person name="Bhattacharyya A."/>
            <person name="Bartman A."/>
            <person name="Gardner W."/>
            <person name="Grechkin G."/>
            <person name="Zhu L."/>
            <person name="Vasieva O."/>
            <person name="Chu L."/>
            <person name="Kogan Y."/>
            <person name="Chaga O."/>
            <person name="Goltsman E."/>
            <person name="Bernal A."/>
            <person name="Larsen N."/>
            <person name="D'Souza M."/>
            <person name="Walunas T."/>
            <person name="Pusch G."/>
            <person name="Haselkorn R."/>
            <person name="Fonstein M."/>
            <person name="Kyrpides N.C."/>
            <person name="Overbeek R."/>
        </authorList>
    </citation>
    <scope>NUCLEOTIDE SEQUENCE [LARGE SCALE GENOMIC DNA]</scope>
    <source>
        <strain>ATCC 25586 / DSM 15643 / BCRC 10681 / CIP 101130 / JCM 8532 / KCTC 2640 / LMG 13131 / VPI 4355</strain>
    </source>
</reference>